<evidence type="ECO:0000255" key="1">
    <source>
        <dbReference type="HAMAP-Rule" id="MF_00139"/>
    </source>
</evidence>
<evidence type="ECO:0000255" key="2">
    <source>
        <dbReference type="PROSITE-ProRule" id="PRU01202"/>
    </source>
</evidence>
<keyword id="KW-0378">Hydrolase</keyword>
<keyword id="KW-0511">Multifunctional enzyme</keyword>
<keyword id="KW-0658">Purine biosynthesis</keyword>
<keyword id="KW-1185">Reference proteome</keyword>
<keyword id="KW-0808">Transferase</keyword>
<sequence>MSEPVSTPEHRIPIRRALVSVYDKTDLEDLVRGLHDAGVELVSTGGSAKLIEGLGLPVTKVEDLTGFPECLDGRVKTLHPRVHAGILADRRLDSHVQQLADLGVEPFDLVVSNLYPFRETVASGATPDECVEQIDIGGPSMVRAAAKNHPSVAIVTSPERYADVLAAVAAGGFTLEQRKVLAAEAFTHTAAYDVAVAGWFASTYVPAEDGWPEFAGETWQKAAVLRYGENPHQDAALYTDSSGGGGLAGAEQLHGKEMSYNNYVDTDAARRAAYDFDEPAVAIIKHANPCGIAVGADVAEAHRRAHECDPVSAFGGVIAVNRPVSVEMARQVADVFTEVIVAPSYDEGAVEILQGKKNIRILRCADPAEERSTELRQISGGVLVQVRDHVDATGDDPSTWTLAAGEPASAEVLADLAFAWTACRAAKSNAILLAKDGASVGIGMGQVNRVDSCRLAVSRAGDRAAGSVAASDAFFPFEDGPQILIDAGVTAIVQPGGSVRDELTVEAAKAAGVTMYFTGTRHFFH</sequence>
<dbReference type="EC" id="2.1.2.3" evidence="1"/>
<dbReference type="EC" id="3.5.4.10" evidence="1"/>
<dbReference type="EMBL" id="CP000509">
    <property type="protein sequence ID" value="ABL83083.1"/>
    <property type="molecule type" value="Genomic_DNA"/>
</dbReference>
<dbReference type="SMR" id="A1SMP8"/>
<dbReference type="STRING" id="196162.Noca_3583"/>
<dbReference type="KEGG" id="nca:Noca_3583"/>
<dbReference type="eggNOG" id="COG0138">
    <property type="taxonomic scope" value="Bacteria"/>
</dbReference>
<dbReference type="HOGENOM" id="CLU_016316_5_2_11"/>
<dbReference type="UniPathway" id="UPA00074">
    <property type="reaction ID" value="UER00133"/>
</dbReference>
<dbReference type="UniPathway" id="UPA00074">
    <property type="reaction ID" value="UER00135"/>
</dbReference>
<dbReference type="Proteomes" id="UP000000640">
    <property type="component" value="Chromosome"/>
</dbReference>
<dbReference type="GO" id="GO:0005829">
    <property type="term" value="C:cytosol"/>
    <property type="evidence" value="ECO:0007669"/>
    <property type="project" value="TreeGrafter"/>
</dbReference>
<dbReference type="GO" id="GO:0003937">
    <property type="term" value="F:IMP cyclohydrolase activity"/>
    <property type="evidence" value="ECO:0007669"/>
    <property type="project" value="UniProtKB-UniRule"/>
</dbReference>
<dbReference type="GO" id="GO:0004643">
    <property type="term" value="F:phosphoribosylaminoimidazolecarboxamide formyltransferase activity"/>
    <property type="evidence" value="ECO:0007669"/>
    <property type="project" value="UniProtKB-UniRule"/>
</dbReference>
<dbReference type="GO" id="GO:0006189">
    <property type="term" value="P:'de novo' IMP biosynthetic process"/>
    <property type="evidence" value="ECO:0007669"/>
    <property type="project" value="UniProtKB-UniRule"/>
</dbReference>
<dbReference type="CDD" id="cd01421">
    <property type="entry name" value="IMPCH"/>
    <property type="match status" value="1"/>
</dbReference>
<dbReference type="FunFam" id="3.40.140.20:FF:000001">
    <property type="entry name" value="Bifunctional purine biosynthesis protein PurH"/>
    <property type="match status" value="1"/>
</dbReference>
<dbReference type="FunFam" id="3.40.140.20:FF:000002">
    <property type="entry name" value="Bifunctional purine biosynthesis protein PurH"/>
    <property type="match status" value="1"/>
</dbReference>
<dbReference type="FunFam" id="3.40.50.1380:FF:000001">
    <property type="entry name" value="Bifunctional purine biosynthesis protein PurH"/>
    <property type="match status" value="1"/>
</dbReference>
<dbReference type="Gene3D" id="3.40.140.20">
    <property type="match status" value="2"/>
</dbReference>
<dbReference type="Gene3D" id="3.40.50.1380">
    <property type="entry name" value="Methylglyoxal synthase-like domain"/>
    <property type="match status" value="1"/>
</dbReference>
<dbReference type="HAMAP" id="MF_00139">
    <property type="entry name" value="PurH"/>
    <property type="match status" value="1"/>
</dbReference>
<dbReference type="InterPro" id="IPR024051">
    <property type="entry name" value="AICAR_Tfase_dup_dom_sf"/>
</dbReference>
<dbReference type="InterPro" id="IPR016193">
    <property type="entry name" value="Cytidine_deaminase-like"/>
</dbReference>
<dbReference type="InterPro" id="IPR011607">
    <property type="entry name" value="MGS-like_dom"/>
</dbReference>
<dbReference type="InterPro" id="IPR036914">
    <property type="entry name" value="MGS-like_dom_sf"/>
</dbReference>
<dbReference type="InterPro" id="IPR002695">
    <property type="entry name" value="PurH-like"/>
</dbReference>
<dbReference type="NCBIfam" id="NF002049">
    <property type="entry name" value="PRK00881.1"/>
    <property type="match status" value="1"/>
</dbReference>
<dbReference type="NCBIfam" id="TIGR00355">
    <property type="entry name" value="purH"/>
    <property type="match status" value="1"/>
</dbReference>
<dbReference type="PANTHER" id="PTHR11692:SF0">
    <property type="entry name" value="BIFUNCTIONAL PURINE BIOSYNTHESIS PROTEIN ATIC"/>
    <property type="match status" value="1"/>
</dbReference>
<dbReference type="PANTHER" id="PTHR11692">
    <property type="entry name" value="BIFUNCTIONAL PURINE BIOSYNTHESIS PROTEIN PURH"/>
    <property type="match status" value="1"/>
</dbReference>
<dbReference type="Pfam" id="PF01808">
    <property type="entry name" value="AICARFT_IMPCHas"/>
    <property type="match status" value="1"/>
</dbReference>
<dbReference type="Pfam" id="PF02142">
    <property type="entry name" value="MGS"/>
    <property type="match status" value="1"/>
</dbReference>
<dbReference type="PIRSF" id="PIRSF000414">
    <property type="entry name" value="AICARFT_IMPCHas"/>
    <property type="match status" value="1"/>
</dbReference>
<dbReference type="SMART" id="SM00798">
    <property type="entry name" value="AICARFT_IMPCHas"/>
    <property type="match status" value="1"/>
</dbReference>
<dbReference type="SMART" id="SM00851">
    <property type="entry name" value="MGS"/>
    <property type="match status" value="1"/>
</dbReference>
<dbReference type="SUPFAM" id="SSF53927">
    <property type="entry name" value="Cytidine deaminase-like"/>
    <property type="match status" value="1"/>
</dbReference>
<dbReference type="SUPFAM" id="SSF52335">
    <property type="entry name" value="Methylglyoxal synthase-like"/>
    <property type="match status" value="1"/>
</dbReference>
<dbReference type="PROSITE" id="PS51855">
    <property type="entry name" value="MGS"/>
    <property type="match status" value="1"/>
</dbReference>
<reference key="1">
    <citation type="submission" date="2006-12" db="EMBL/GenBank/DDBJ databases">
        <title>Complete sequence of chromosome 1 of Nocardioides sp. JS614.</title>
        <authorList>
            <person name="Copeland A."/>
            <person name="Lucas S."/>
            <person name="Lapidus A."/>
            <person name="Barry K."/>
            <person name="Detter J.C."/>
            <person name="Glavina del Rio T."/>
            <person name="Hammon N."/>
            <person name="Israni S."/>
            <person name="Dalin E."/>
            <person name="Tice H."/>
            <person name="Pitluck S."/>
            <person name="Thompson L.S."/>
            <person name="Brettin T."/>
            <person name="Bruce D."/>
            <person name="Han C."/>
            <person name="Tapia R."/>
            <person name="Schmutz J."/>
            <person name="Larimer F."/>
            <person name="Land M."/>
            <person name="Hauser L."/>
            <person name="Kyrpides N."/>
            <person name="Kim E."/>
            <person name="Mattes T."/>
            <person name="Gossett J."/>
            <person name="Richardson P."/>
        </authorList>
    </citation>
    <scope>NUCLEOTIDE SEQUENCE [LARGE SCALE GENOMIC DNA]</scope>
    <source>
        <strain>ATCC BAA-499 / JS614</strain>
    </source>
</reference>
<proteinExistence type="inferred from homology"/>
<accession>A1SMP8</accession>
<comment type="catalytic activity">
    <reaction evidence="1">
        <text>(6R)-10-formyltetrahydrofolate + 5-amino-1-(5-phospho-beta-D-ribosyl)imidazole-4-carboxamide = 5-formamido-1-(5-phospho-D-ribosyl)imidazole-4-carboxamide + (6S)-5,6,7,8-tetrahydrofolate</text>
        <dbReference type="Rhea" id="RHEA:22192"/>
        <dbReference type="ChEBI" id="CHEBI:57453"/>
        <dbReference type="ChEBI" id="CHEBI:58467"/>
        <dbReference type="ChEBI" id="CHEBI:58475"/>
        <dbReference type="ChEBI" id="CHEBI:195366"/>
        <dbReference type="EC" id="2.1.2.3"/>
    </reaction>
</comment>
<comment type="catalytic activity">
    <reaction evidence="1">
        <text>IMP + H2O = 5-formamido-1-(5-phospho-D-ribosyl)imidazole-4-carboxamide</text>
        <dbReference type="Rhea" id="RHEA:18445"/>
        <dbReference type="ChEBI" id="CHEBI:15377"/>
        <dbReference type="ChEBI" id="CHEBI:58053"/>
        <dbReference type="ChEBI" id="CHEBI:58467"/>
        <dbReference type="EC" id="3.5.4.10"/>
    </reaction>
</comment>
<comment type="pathway">
    <text evidence="1">Purine metabolism; IMP biosynthesis via de novo pathway; 5-formamido-1-(5-phospho-D-ribosyl)imidazole-4-carboxamide from 5-amino-1-(5-phospho-D-ribosyl)imidazole-4-carboxamide (10-formyl THF route): step 1/1.</text>
</comment>
<comment type="pathway">
    <text evidence="1">Purine metabolism; IMP biosynthesis via de novo pathway; IMP from 5-formamido-1-(5-phospho-D-ribosyl)imidazole-4-carboxamide: step 1/1.</text>
</comment>
<comment type="domain">
    <text evidence="1">The IMP cyclohydrolase activity resides in the N-terminal region.</text>
</comment>
<comment type="similarity">
    <text evidence="1">Belongs to the PurH family.</text>
</comment>
<name>PUR9_NOCSJ</name>
<protein>
    <recommendedName>
        <fullName evidence="1">Bifunctional purine biosynthesis protein PurH</fullName>
    </recommendedName>
    <domain>
        <recommendedName>
            <fullName evidence="1">Phosphoribosylaminoimidazolecarboxamide formyltransferase</fullName>
            <ecNumber evidence="1">2.1.2.3</ecNumber>
        </recommendedName>
        <alternativeName>
            <fullName evidence="1">AICAR transformylase</fullName>
        </alternativeName>
    </domain>
    <domain>
        <recommendedName>
            <fullName evidence="1">IMP cyclohydrolase</fullName>
            <ecNumber evidence="1">3.5.4.10</ecNumber>
        </recommendedName>
        <alternativeName>
            <fullName evidence="1">ATIC</fullName>
        </alternativeName>
        <alternativeName>
            <fullName evidence="1">IMP synthase</fullName>
        </alternativeName>
        <alternativeName>
            <fullName evidence="1">Inosinicase</fullName>
        </alternativeName>
    </domain>
</protein>
<gene>
    <name evidence="1" type="primary">purH</name>
    <name type="ordered locus">Noca_3583</name>
</gene>
<organism>
    <name type="scientific">Nocardioides sp. (strain ATCC BAA-499 / JS614)</name>
    <dbReference type="NCBI Taxonomy" id="196162"/>
    <lineage>
        <taxon>Bacteria</taxon>
        <taxon>Bacillati</taxon>
        <taxon>Actinomycetota</taxon>
        <taxon>Actinomycetes</taxon>
        <taxon>Propionibacteriales</taxon>
        <taxon>Nocardioidaceae</taxon>
        <taxon>Nocardioides</taxon>
    </lineage>
</organism>
<feature type="chain" id="PRO_1000018919" description="Bifunctional purine biosynthesis protein PurH">
    <location>
        <begin position="1"/>
        <end position="525"/>
    </location>
</feature>
<feature type="domain" description="MGS-like" evidence="2">
    <location>
        <begin position="10"/>
        <end position="156"/>
    </location>
</feature>